<evidence type="ECO:0000255" key="1">
    <source>
        <dbReference type="HAMAP-Rule" id="MF_00150"/>
    </source>
</evidence>
<keyword id="KW-0028">Amino-acid biosynthesis</keyword>
<keyword id="KW-0055">Arginine biosynthesis</keyword>
<keyword id="KW-0963">Cytoplasm</keyword>
<keyword id="KW-0521">NADP</keyword>
<keyword id="KW-0560">Oxidoreductase</keyword>
<feature type="chain" id="PRO_1000096739" description="N-acetyl-gamma-glutamyl-phosphate reductase">
    <location>
        <begin position="1"/>
        <end position="317"/>
    </location>
</feature>
<feature type="active site" evidence="1">
    <location>
        <position position="136"/>
    </location>
</feature>
<reference key="1">
    <citation type="submission" date="2008-06" db="EMBL/GenBank/DDBJ databases">
        <title>Complete sequence of Stenotrophomonas maltophilia R551-3.</title>
        <authorList>
            <consortium name="US DOE Joint Genome Institute"/>
            <person name="Lucas S."/>
            <person name="Copeland A."/>
            <person name="Lapidus A."/>
            <person name="Glavina del Rio T."/>
            <person name="Dalin E."/>
            <person name="Tice H."/>
            <person name="Pitluck S."/>
            <person name="Chain P."/>
            <person name="Malfatti S."/>
            <person name="Shin M."/>
            <person name="Vergez L."/>
            <person name="Lang D."/>
            <person name="Schmutz J."/>
            <person name="Larimer F."/>
            <person name="Land M."/>
            <person name="Hauser L."/>
            <person name="Kyrpides N."/>
            <person name="Mikhailova N."/>
            <person name="Taghavi S."/>
            <person name="Monchy S."/>
            <person name="Newman L."/>
            <person name="Vangronsveld J."/>
            <person name="van der Lelie D."/>
            <person name="Richardson P."/>
        </authorList>
    </citation>
    <scope>NUCLEOTIDE SEQUENCE [LARGE SCALE GENOMIC DNA]</scope>
    <source>
        <strain>R551-3</strain>
    </source>
</reference>
<protein>
    <recommendedName>
        <fullName evidence="1">N-acetyl-gamma-glutamyl-phosphate reductase</fullName>
        <shortName evidence="1">AGPR</shortName>
        <ecNumber evidence="1">1.2.1.38</ecNumber>
    </recommendedName>
    <alternativeName>
        <fullName evidence="1">N-acetyl-glutamate semialdehyde dehydrogenase</fullName>
        <shortName evidence="1">NAGSA dehydrogenase</shortName>
    </alternativeName>
</protein>
<proteinExistence type="inferred from homology"/>
<sequence length="317" mass="34162">MNDSTFTLGIVGARGHTGAELIKLVAAHPRLQLAFVSSRERAGQRLADHHPEFQGELRYENLDADAVAAKGVDAVILALPNGLAAPFVAALEAAKPDTVIVDLSADYRFDNAWYYGLPELTRGRYNGQKHISNPGCYATAMQLAIYPLLDLLAGPPQCFGVSGYSGAGTTPSDKNNVELLADNLMPYALTNHVHEREVSVQMGVAVEFMPHVAPHFRGITLTANLWLNRVQTREQIVERFQQAYAGEPLIEVVDEAPWVSRIAGRHGAQVGGFTLAPGGKRVVVVATLDNLLKGAASQAMQNLNLALGIDELTSIPH</sequence>
<organism>
    <name type="scientific">Stenotrophomonas maltophilia (strain R551-3)</name>
    <dbReference type="NCBI Taxonomy" id="391008"/>
    <lineage>
        <taxon>Bacteria</taxon>
        <taxon>Pseudomonadati</taxon>
        <taxon>Pseudomonadota</taxon>
        <taxon>Gammaproteobacteria</taxon>
        <taxon>Lysobacterales</taxon>
        <taxon>Lysobacteraceae</taxon>
        <taxon>Stenotrophomonas</taxon>
        <taxon>Stenotrophomonas maltophilia group</taxon>
    </lineage>
</organism>
<name>ARGC_STRM5</name>
<accession>B4SQ93</accession>
<dbReference type="EC" id="1.2.1.38" evidence="1"/>
<dbReference type="EMBL" id="CP001111">
    <property type="protein sequence ID" value="ACF52424.1"/>
    <property type="molecule type" value="Genomic_DNA"/>
</dbReference>
<dbReference type="RefSeq" id="WP_012511641.1">
    <property type="nucleotide sequence ID" value="NC_011071.1"/>
</dbReference>
<dbReference type="SMR" id="B4SQ93"/>
<dbReference type="STRING" id="391008.Smal_2724"/>
<dbReference type="KEGG" id="smt:Smal_2724"/>
<dbReference type="eggNOG" id="COG0002">
    <property type="taxonomic scope" value="Bacteria"/>
</dbReference>
<dbReference type="HOGENOM" id="CLU_006384_3_0_6"/>
<dbReference type="OrthoDB" id="9801289at2"/>
<dbReference type="UniPathway" id="UPA00068">
    <property type="reaction ID" value="UER00108"/>
</dbReference>
<dbReference type="Proteomes" id="UP000001867">
    <property type="component" value="Chromosome"/>
</dbReference>
<dbReference type="GO" id="GO:0005737">
    <property type="term" value="C:cytoplasm"/>
    <property type="evidence" value="ECO:0007669"/>
    <property type="project" value="UniProtKB-SubCell"/>
</dbReference>
<dbReference type="GO" id="GO:0003942">
    <property type="term" value="F:N-acetyl-gamma-glutamyl-phosphate reductase activity"/>
    <property type="evidence" value="ECO:0007669"/>
    <property type="project" value="UniProtKB-UniRule"/>
</dbReference>
<dbReference type="GO" id="GO:0051287">
    <property type="term" value="F:NAD binding"/>
    <property type="evidence" value="ECO:0007669"/>
    <property type="project" value="InterPro"/>
</dbReference>
<dbReference type="GO" id="GO:0070401">
    <property type="term" value="F:NADP+ binding"/>
    <property type="evidence" value="ECO:0007669"/>
    <property type="project" value="InterPro"/>
</dbReference>
<dbReference type="GO" id="GO:0006526">
    <property type="term" value="P:L-arginine biosynthetic process"/>
    <property type="evidence" value="ECO:0007669"/>
    <property type="project" value="UniProtKB-UniRule"/>
</dbReference>
<dbReference type="CDD" id="cd23936">
    <property type="entry name" value="AGPR_C_ARG5_6_like"/>
    <property type="match status" value="1"/>
</dbReference>
<dbReference type="CDD" id="cd24149">
    <property type="entry name" value="AGPR_N_ARG5_6_like"/>
    <property type="match status" value="1"/>
</dbReference>
<dbReference type="Gene3D" id="3.30.360.10">
    <property type="entry name" value="Dihydrodipicolinate Reductase, domain 2"/>
    <property type="match status" value="1"/>
</dbReference>
<dbReference type="Gene3D" id="3.40.50.720">
    <property type="entry name" value="NAD(P)-binding Rossmann-like Domain"/>
    <property type="match status" value="1"/>
</dbReference>
<dbReference type="HAMAP" id="MF_00150">
    <property type="entry name" value="ArgC_type1"/>
    <property type="match status" value="1"/>
</dbReference>
<dbReference type="InterPro" id="IPR023013">
    <property type="entry name" value="AGPR_AS"/>
</dbReference>
<dbReference type="InterPro" id="IPR000706">
    <property type="entry name" value="AGPR_type-1"/>
</dbReference>
<dbReference type="InterPro" id="IPR036291">
    <property type="entry name" value="NAD(P)-bd_dom_sf"/>
</dbReference>
<dbReference type="InterPro" id="IPR050085">
    <property type="entry name" value="NAGSA_dehydrogenase"/>
</dbReference>
<dbReference type="InterPro" id="IPR000534">
    <property type="entry name" value="Semialdehyde_DH_NAD-bd"/>
</dbReference>
<dbReference type="NCBIfam" id="TIGR01850">
    <property type="entry name" value="argC"/>
    <property type="match status" value="1"/>
</dbReference>
<dbReference type="PANTHER" id="PTHR32338:SF10">
    <property type="entry name" value="N-ACETYL-GAMMA-GLUTAMYL-PHOSPHATE REDUCTASE, CHLOROPLASTIC-RELATED"/>
    <property type="match status" value="1"/>
</dbReference>
<dbReference type="PANTHER" id="PTHR32338">
    <property type="entry name" value="N-ACETYL-GAMMA-GLUTAMYL-PHOSPHATE REDUCTASE, CHLOROPLASTIC-RELATED-RELATED"/>
    <property type="match status" value="1"/>
</dbReference>
<dbReference type="Pfam" id="PF01118">
    <property type="entry name" value="Semialdhyde_dh"/>
    <property type="match status" value="1"/>
</dbReference>
<dbReference type="Pfam" id="PF22698">
    <property type="entry name" value="Semialdhyde_dhC_1"/>
    <property type="match status" value="1"/>
</dbReference>
<dbReference type="SMART" id="SM00859">
    <property type="entry name" value="Semialdhyde_dh"/>
    <property type="match status" value="1"/>
</dbReference>
<dbReference type="SUPFAM" id="SSF55347">
    <property type="entry name" value="Glyceraldehyde-3-phosphate dehydrogenase-like, C-terminal domain"/>
    <property type="match status" value="1"/>
</dbReference>
<dbReference type="SUPFAM" id="SSF51735">
    <property type="entry name" value="NAD(P)-binding Rossmann-fold domains"/>
    <property type="match status" value="1"/>
</dbReference>
<dbReference type="PROSITE" id="PS01224">
    <property type="entry name" value="ARGC"/>
    <property type="match status" value="1"/>
</dbReference>
<gene>
    <name evidence="1" type="primary">argC</name>
    <name type="ordered locus">Smal_2724</name>
</gene>
<comment type="function">
    <text evidence="1">Catalyzes the NADPH-dependent reduction of N-acetyl-5-glutamyl phosphate to yield N-acetyl-L-glutamate 5-semialdehyde.</text>
</comment>
<comment type="catalytic activity">
    <reaction evidence="1">
        <text>N-acetyl-L-glutamate 5-semialdehyde + phosphate + NADP(+) = N-acetyl-L-glutamyl 5-phosphate + NADPH + H(+)</text>
        <dbReference type="Rhea" id="RHEA:21588"/>
        <dbReference type="ChEBI" id="CHEBI:15378"/>
        <dbReference type="ChEBI" id="CHEBI:29123"/>
        <dbReference type="ChEBI" id="CHEBI:43474"/>
        <dbReference type="ChEBI" id="CHEBI:57783"/>
        <dbReference type="ChEBI" id="CHEBI:57936"/>
        <dbReference type="ChEBI" id="CHEBI:58349"/>
        <dbReference type="EC" id="1.2.1.38"/>
    </reaction>
</comment>
<comment type="pathway">
    <text evidence="1">Amino-acid biosynthesis; L-arginine biosynthesis; N(2)-acetyl-L-ornithine from L-glutamate: step 3/4.</text>
</comment>
<comment type="subcellular location">
    <subcellularLocation>
        <location evidence="1">Cytoplasm</location>
    </subcellularLocation>
</comment>
<comment type="similarity">
    <text evidence="1">Belongs to the NAGSA dehydrogenase family. Type 1 subfamily.</text>
</comment>